<reference key="1">
    <citation type="journal article" date="2006" name="J. Bacteriol.">
        <title>Complete genome sequence of the dehalorespiring bacterium Desulfitobacterium hafniense Y51 and comparison with Dehalococcoides ethenogenes 195.</title>
        <authorList>
            <person name="Nonaka H."/>
            <person name="Keresztes G."/>
            <person name="Shinoda Y."/>
            <person name="Ikenaga Y."/>
            <person name="Abe M."/>
            <person name="Naito K."/>
            <person name="Inatomi K."/>
            <person name="Furukawa K."/>
            <person name="Inui M."/>
            <person name="Yukawa H."/>
        </authorList>
    </citation>
    <scope>NUCLEOTIDE SEQUENCE [LARGE SCALE GENOMIC DNA]</scope>
    <source>
        <strain>Y51</strain>
    </source>
</reference>
<protein>
    <recommendedName>
        <fullName evidence="1">Protein-glutamate methylesterase/protein-glutamine glutaminase</fullName>
        <ecNumber evidence="1">3.1.1.61</ecNumber>
        <ecNumber evidence="1">3.5.1.44</ecNumber>
    </recommendedName>
</protein>
<proteinExistence type="inferred from homology"/>
<keyword id="KW-0145">Chemotaxis</keyword>
<keyword id="KW-0963">Cytoplasm</keyword>
<keyword id="KW-0378">Hydrolase</keyword>
<keyword id="KW-0597">Phosphoprotein</keyword>
<keyword id="KW-1185">Reference proteome</keyword>
<accession>Q24T61</accession>
<comment type="function">
    <text evidence="1">Involved in chemotaxis. Part of a chemotaxis signal transduction system that modulates chemotaxis in response to various stimuli. Catalyzes the demethylation of specific methylglutamate residues introduced into the chemoreceptors (methyl-accepting chemotaxis proteins or MCP) by CheR. Also mediates the irreversible deamidation of specific glutamine residues to glutamic acid.</text>
</comment>
<comment type="catalytic activity">
    <reaction evidence="1">
        <text>[protein]-L-glutamate 5-O-methyl ester + H2O = L-glutamyl-[protein] + methanol + H(+)</text>
        <dbReference type="Rhea" id="RHEA:23236"/>
        <dbReference type="Rhea" id="RHEA-COMP:10208"/>
        <dbReference type="Rhea" id="RHEA-COMP:10311"/>
        <dbReference type="ChEBI" id="CHEBI:15377"/>
        <dbReference type="ChEBI" id="CHEBI:15378"/>
        <dbReference type="ChEBI" id="CHEBI:17790"/>
        <dbReference type="ChEBI" id="CHEBI:29973"/>
        <dbReference type="ChEBI" id="CHEBI:82795"/>
        <dbReference type="EC" id="3.1.1.61"/>
    </reaction>
</comment>
<comment type="catalytic activity">
    <reaction evidence="1">
        <text>L-glutaminyl-[protein] + H2O = L-glutamyl-[protein] + NH4(+)</text>
        <dbReference type="Rhea" id="RHEA:16441"/>
        <dbReference type="Rhea" id="RHEA-COMP:10207"/>
        <dbReference type="Rhea" id="RHEA-COMP:10208"/>
        <dbReference type="ChEBI" id="CHEBI:15377"/>
        <dbReference type="ChEBI" id="CHEBI:28938"/>
        <dbReference type="ChEBI" id="CHEBI:29973"/>
        <dbReference type="ChEBI" id="CHEBI:30011"/>
        <dbReference type="EC" id="3.5.1.44"/>
    </reaction>
</comment>
<comment type="subcellular location">
    <subcellularLocation>
        <location evidence="1">Cytoplasm</location>
    </subcellularLocation>
</comment>
<comment type="domain">
    <text evidence="1">Contains a C-terminal catalytic domain, and an N-terminal region which modulates catalytic activity.</text>
</comment>
<comment type="PTM">
    <text evidence="1">Phosphorylated by CheA. Phosphorylation of the N-terminal regulatory domain activates the methylesterase activity.</text>
</comment>
<comment type="similarity">
    <text evidence="1">Belongs to the CheB family.</text>
</comment>
<gene>
    <name evidence="1" type="primary">cheB</name>
    <name type="ordered locus">DSY2992</name>
</gene>
<organism>
    <name type="scientific">Desulfitobacterium hafniense (strain Y51)</name>
    <dbReference type="NCBI Taxonomy" id="138119"/>
    <lineage>
        <taxon>Bacteria</taxon>
        <taxon>Bacillati</taxon>
        <taxon>Bacillota</taxon>
        <taxon>Clostridia</taxon>
        <taxon>Eubacteriales</taxon>
        <taxon>Desulfitobacteriaceae</taxon>
        <taxon>Desulfitobacterium</taxon>
    </lineage>
</organism>
<evidence type="ECO:0000255" key="1">
    <source>
        <dbReference type="HAMAP-Rule" id="MF_00099"/>
    </source>
</evidence>
<evidence type="ECO:0000256" key="2">
    <source>
        <dbReference type="SAM" id="MobiDB-lite"/>
    </source>
</evidence>
<feature type="chain" id="PRO_0000264273" description="Protein-glutamate methylesterase/protein-glutamine glutaminase">
    <location>
        <begin position="1"/>
        <end position="392"/>
    </location>
</feature>
<feature type="domain" description="Response regulatory" evidence="1">
    <location>
        <begin position="9"/>
        <end position="126"/>
    </location>
</feature>
<feature type="domain" description="CheB-type methylesterase" evidence="1">
    <location>
        <begin position="198"/>
        <end position="392"/>
    </location>
</feature>
<feature type="region of interest" description="Disordered" evidence="2">
    <location>
        <begin position="148"/>
        <end position="194"/>
    </location>
</feature>
<feature type="compositionally biased region" description="Low complexity" evidence="2">
    <location>
        <begin position="173"/>
        <end position="185"/>
    </location>
</feature>
<feature type="active site" evidence="1">
    <location>
        <position position="210"/>
    </location>
</feature>
<feature type="active site" evidence="1">
    <location>
        <position position="237"/>
    </location>
</feature>
<feature type="active site" evidence="1">
    <location>
        <position position="334"/>
    </location>
</feature>
<feature type="modified residue" description="4-aspartylphosphate" evidence="1">
    <location>
        <position position="60"/>
    </location>
</feature>
<name>CHEB_DESHY</name>
<sequence>MNQPKSPITVLIVDDSPFMRLTLQKILSQDPEIKVLDTARDGKEGIEKLQALRPQVVTMDIEMPQIDGLQALGEIMRWQPTPIIILSALTTEGAQASVKALEAGAFDVVAKPSGGPGADIQALARDLIDKVKAAAQVNLGRLGKKGAVSRISSASGSRPPWTAGAASENTNRLSSPGSTSSTLGSAKGRSLDSGEALPKYPVEIVAIGTSTGGPSALQAVLTQLPGNLPVPVLVAQHMPPGFTAPLAQRLNGMSPLTIREGVHGEALKAGTIYFAPAGKQMQVQSRGSQLILHIGDESPITTLYHPSVDVMFMSLAKEVGKGTLGVVMTGMGNDGLRGMREIKERGGYAIAEAEETCVVYGMPRAIVDAGLANRVAPLGEIARHIVECVQRR</sequence>
<dbReference type="EC" id="3.1.1.61" evidence="1"/>
<dbReference type="EC" id="3.5.1.44" evidence="1"/>
<dbReference type="EMBL" id="AP008230">
    <property type="protein sequence ID" value="BAE84781.1"/>
    <property type="molecule type" value="Genomic_DNA"/>
</dbReference>
<dbReference type="RefSeq" id="WP_011460762.1">
    <property type="nucleotide sequence ID" value="NC_007907.1"/>
</dbReference>
<dbReference type="SMR" id="Q24T61"/>
<dbReference type="STRING" id="138119.DSY2992"/>
<dbReference type="KEGG" id="dsy:DSY2992"/>
<dbReference type="eggNOG" id="COG2201">
    <property type="taxonomic scope" value="Bacteria"/>
</dbReference>
<dbReference type="HOGENOM" id="CLU_000445_51_0_9"/>
<dbReference type="Proteomes" id="UP000001946">
    <property type="component" value="Chromosome"/>
</dbReference>
<dbReference type="GO" id="GO:0005737">
    <property type="term" value="C:cytoplasm"/>
    <property type="evidence" value="ECO:0007669"/>
    <property type="project" value="UniProtKB-SubCell"/>
</dbReference>
<dbReference type="GO" id="GO:0000156">
    <property type="term" value="F:phosphorelay response regulator activity"/>
    <property type="evidence" value="ECO:0007669"/>
    <property type="project" value="InterPro"/>
</dbReference>
<dbReference type="GO" id="GO:0008984">
    <property type="term" value="F:protein-glutamate methylesterase activity"/>
    <property type="evidence" value="ECO:0007669"/>
    <property type="project" value="UniProtKB-UniRule"/>
</dbReference>
<dbReference type="GO" id="GO:0050568">
    <property type="term" value="F:protein-glutamine glutaminase activity"/>
    <property type="evidence" value="ECO:0007669"/>
    <property type="project" value="UniProtKB-UniRule"/>
</dbReference>
<dbReference type="GO" id="GO:0006935">
    <property type="term" value="P:chemotaxis"/>
    <property type="evidence" value="ECO:0007669"/>
    <property type="project" value="UniProtKB-UniRule"/>
</dbReference>
<dbReference type="CDD" id="cd16432">
    <property type="entry name" value="CheB_Rec"/>
    <property type="match status" value="1"/>
</dbReference>
<dbReference type="CDD" id="cd17541">
    <property type="entry name" value="REC_CheB-like"/>
    <property type="match status" value="1"/>
</dbReference>
<dbReference type="Gene3D" id="3.40.50.2300">
    <property type="match status" value="1"/>
</dbReference>
<dbReference type="Gene3D" id="3.40.50.180">
    <property type="entry name" value="Methylesterase CheB, C-terminal domain"/>
    <property type="match status" value="1"/>
</dbReference>
<dbReference type="HAMAP" id="MF_00099">
    <property type="entry name" value="CheB_chemtxs"/>
    <property type="match status" value="1"/>
</dbReference>
<dbReference type="InterPro" id="IPR008248">
    <property type="entry name" value="CheB-like"/>
</dbReference>
<dbReference type="InterPro" id="IPR035909">
    <property type="entry name" value="CheB_C"/>
</dbReference>
<dbReference type="InterPro" id="IPR011006">
    <property type="entry name" value="CheY-like_superfamily"/>
</dbReference>
<dbReference type="InterPro" id="IPR000673">
    <property type="entry name" value="Sig_transdc_resp-reg_Me-estase"/>
</dbReference>
<dbReference type="InterPro" id="IPR001789">
    <property type="entry name" value="Sig_transdc_resp-reg_receiver"/>
</dbReference>
<dbReference type="NCBIfam" id="NF001965">
    <property type="entry name" value="PRK00742.1"/>
    <property type="match status" value="1"/>
</dbReference>
<dbReference type="PANTHER" id="PTHR42872">
    <property type="entry name" value="PROTEIN-GLUTAMATE METHYLESTERASE/PROTEIN-GLUTAMINE GLUTAMINASE"/>
    <property type="match status" value="1"/>
</dbReference>
<dbReference type="PANTHER" id="PTHR42872:SF6">
    <property type="entry name" value="PROTEIN-GLUTAMATE METHYLESTERASE_PROTEIN-GLUTAMINE GLUTAMINASE"/>
    <property type="match status" value="1"/>
</dbReference>
<dbReference type="Pfam" id="PF01339">
    <property type="entry name" value="CheB_methylest"/>
    <property type="match status" value="1"/>
</dbReference>
<dbReference type="Pfam" id="PF00072">
    <property type="entry name" value="Response_reg"/>
    <property type="match status" value="1"/>
</dbReference>
<dbReference type="PIRSF" id="PIRSF000876">
    <property type="entry name" value="RR_chemtxs_CheB"/>
    <property type="match status" value="1"/>
</dbReference>
<dbReference type="SMART" id="SM00448">
    <property type="entry name" value="REC"/>
    <property type="match status" value="1"/>
</dbReference>
<dbReference type="SUPFAM" id="SSF52172">
    <property type="entry name" value="CheY-like"/>
    <property type="match status" value="1"/>
</dbReference>
<dbReference type="SUPFAM" id="SSF52738">
    <property type="entry name" value="Methylesterase CheB, C-terminal domain"/>
    <property type="match status" value="1"/>
</dbReference>
<dbReference type="PROSITE" id="PS50122">
    <property type="entry name" value="CHEB"/>
    <property type="match status" value="1"/>
</dbReference>
<dbReference type="PROSITE" id="PS50110">
    <property type="entry name" value="RESPONSE_REGULATORY"/>
    <property type="match status" value="1"/>
</dbReference>